<keyword id="KW-0648">Protein biosynthesis</keyword>
<keyword id="KW-0808">Transferase</keyword>
<comment type="function">
    <text evidence="1">Attaches a formyl group to the free amino group of methionyl-tRNA(fMet). The formyl group appears to play a dual role in the initiator identity of N-formylmethionyl-tRNA by promoting its recognition by IF2 and preventing the misappropriation of this tRNA by the elongation apparatus.</text>
</comment>
<comment type="catalytic activity">
    <reaction evidence="1">
        <text>L-methionyl-tRNA(fMet) + (6R)-10-formyltetrahydrofolate = N-formyl-L-methionyl-tRNA(fMet) + (6S)-5,6,7,8-tetrahydrofolate + H(+)</text>
        <dbReference type="Rhea" id="RHEA:24380"/>
        <dbReference type="Rhea" id="RHEA-COMP:9952"/>
        <dbReference type="Rhea" id="RHEA-COMP:9953"/>
        <dbReference type="ChEBI" id="CHEBI:15378"/>
        <dbReference type="ChEBI" id="CHEBI:57453"/>
        <dbReference type="ChEBI" id="CHEBI:78530"/>
        <dbReference type="ChEBI" id="CHEBI:78844"/>
        <dbReference type="ChEBI" id="CHEBI:195366"/>
        <dbReference type="EC" id="2.1.2.9"/>
    </reaction>
</comment>
<comment type="similarity">
    <text evidence="1">Belongs to the Fmt family.</text>
</comment>
<feature type="chain" id="PRO_1000098446" description="Methionyl-tRNA formyltransferase">
    <location>
        <begin position="1"/>
        <end position="307"/>
    </location>
</feature>
<feature type="binding site" evidence="1">
    <location>
        <begin position="108"/>
        <end position="111"/>
    </location>
    <ligand>
        <name>(6S)-5,6,7,8-tetrahydrofolate</name>
        <dbReference type="ChEBI" id="CHEBI:57453"/>
    </ligand>
</feature>
<protein>
    <recommendedName>
        <fullName evidence="1">Methionyl-tRNA formyltransferase</fullName>
        <ecNumber evidence="1">2.1.2.9</ecNumber>
    </recommendedName>
</protein>
<evidence type="ECO:0000255" key="1">
    <source>
        <dbReference type="HAMAP-Rule" id="MF_00182"/>
    </source>
</evidence>
<organism>
    <name type="scientific">Stenotrophomonas maltophilia (strain R551-3)</name>
    <dbReference type="NCBI Taxonomy" id="391008"/>
    <lineage>
        <taxon>Bacteria</taxon>
        <taxon>Pseudomonadati</taxon>
        <taxon>Pseudomonadota</taxon>
        <taxon>Gammaproteobacteria</taxon>
        <taxon>Lysobacterales</taxon>
        <taxon>Lysobacteraceae</taxon>
        <taxon>Stenotrophomonas</taxon>
        <taxon>Stenotrophomonas maltophilia group</taxon>
    </lineage>
</organism>
<sequence length="307" mass="32587">MRIVFAGTPEFAVSSLRAAARHHEVVAVYTQPDRPAGRGRGLAPSPVKLEAVARGIPVYQPESLKDEAAQQQLRDLQPDLMVVVAYGLILPKAVLAIPTHGCWNVHASLLPRWRGAAPIQRAIQAGDTKTGVCLMQMEAGLDTGPVLLHQELPIATTDTGGQLHDKLAELGAQVLSDGLGLLRAGIKPVARPQPEQGVTYAHKLDKAEARLDWVLDAGALARTVRAFNPWPIAEASLAGERVRIHGAVALDLAHGQAPGTVLAASRDGIDIACGQGALRLRVLQREGGKAITAADYLNARRDLRVGA</sequence>
<name>FMT_STRM5</name>
<proteinExistence type="inferred from homology"/>
<reference key="1">
    <citation type="submission" date="2008-06" db="EMBL/GenBank/DDBJ databases">
        <title>Complete sequence of Stenotrophomonas maltophilia R551-3.</title>
        <authorList>
            <consortium name="US DOE Joint Genome Institute"/>
            <person name="Lucas S."/>
            <person name="Copeland A."/>
            <person name="Lapidus A."/>
            <person name="Glavina del Rio T."/>
            <person name="Dalin E."/>
            <person name="Tice H."/>
            <person name="Pitluck S."/>
            <person name="Chain P."/>
            <person name="Malfatti S."/>
            <person name="Shin M."/>
            <person name="Vergez L."/>
            <person name="Lang D."/>
            <person name="Schmutz J."/>
            <person name="Larimer F."/>
            <person name="Land M."/>
            <person name="Hauser L."/>
            <person name="Kyrpides N."/>
            <person name="Mikhailova N."/>
            <person name="Taghavi S."/>
            <person name="Monchy S."/>
            <person name="Newman L."/>
            <person name="Vangronsveld J."/>
            <person name="van der Lelie D."/>
            <person name="Richardson P."/>
        </authorList>
    </citation>
    <scope>NUCLEOTIDE SEQUENCE [LARGE SCALE GENOMIC DNA]</scope>
    <source>
        <strain>R551-3</strain>
    </source>
</reference>
<accession>B4SKH6</accession>
<gene>
    <name evidence="1" type="primary">fmt</name>
    <name type="ordered locus">Smal_3584</name>
</gene>
<dbReference type="EC" id="2.1.2.9" evidence="1"/>
<dbReference type="EMBL" id="CP001111">
    <property type="protein sequence ID" value="ACF53283.1"/>
    <property type="molecule type" value="Genomic_DNA"/>
</dbReference>
<dbReference type="RefSeq" id="WP_006395830.1">
    <property type="nucleotide sequence ID" value="NC_011071.1"/>
</dbReference>
<dbReference type="SMR" id="B4SKH6"/>
<dbReference type="STRING" id="391008.Smal_3584"/>
<dbReference type="KEGG" id="smt:Smal_3584"/>
<dbReference type="eggNOG" id="COG0223">
    <property type="taxonomic scope" value="Bacteria"/>
</dbReference>
<dbReference type="HOGENOM" id="CLU_033347_1_2_6"/>
<dbReference type="OrthoDB" id="9802815at2"/>
<dbReference type="Proteomes" id="UP000001867">
    <property type="component" value="Chromosome"/>
</dbReference>
<dbReference type="GO" id="GO:0005829">
    <property type="term" value="C:cytosol"/>
    <property type="evidence" value="ECO:0007669"/>
    <property type="project" value="TreeGrafter"/>
</dbReference>
<dbReference type="GO" id="GO:0004479">
    <property type="term" value="F:methionyl-tRNA formyltransferase activity"/>
    <property type="evidence" value="ECO:0007669"/>
    <property type="project" value="UniProtKB-UniRule"/>
</dbReference>
<dbReference type="CDD" id="cd08646">
    <property type="entry name" value="FMT_core_Met-tRNA-FMT_N"/>
    <property type="match status" value="1"/>
</dbReference>
<dbReference type="CDD" id="cd08704">
    <property type="entry name" value="Met_tRNA_FMT_C"/>
    <property type="match status" value="1"/>
</dbReference>
<dbReference type="FunFam" id="3.40.50.170:FF:000003">
    <property type="entry name" value="Methionyl-tRNA formyltransferase"/>
    <property type="match status" value="1"/>
</dbReference>
<dbReference type="Gene3D" id="3.10.25.10">
    <property type="entry name" value="Formyl transferase, C-terminal domain"/>
    <property type="match status" value="1"/>
</dbReference>
<dbReference type="Gene3D" id="3.40.50.170">
    <property type="entry name" value="Formyl transferase, N-terminal domain"/>
    <property type="match status" value="1"/>
</dbReference>
<dbReference type="HAMAP" id="MF_00182">
    <property type="entry name" value="Formyl_trans"/>
    <property type="match status" value="1"/>
</dbReference>
<dbReference type="InterPro" id="IPR005794">
    <property type="entry name" value="Fmt"/>
</dbReference>
<dbReference type="InterPro" id="IPR005793">
    <property type="entry name" value="Formyl_trans_C"/>
</dbReference>
<dbReference type="InterPro" id="IPR037022">
    <property type="entry name" value="Formyl_trans_C_sf"/>
</dbReference>
<dbReference type="InterPro" id="IPR002376">
    <property type="entry name" value="Formyl_transf_N"/>
</dbReference>
<dbReference type="InterPro" id="IPR036477">
    <property type="entry name" value="Formyl_transf_N_sf"/>
</dbReference>
<dbReference type="InterPro" id="IPR011034">
    <property type="entry name" value="Formyl_transferase-like_C_sf"/>
</dbReference>
<dbReference type="InterPro" id="IPR001555">
    <property type="entry name" value="GART_AS"/>
</dbReference>
<dbReference type="InterPro" id="IPR044135">
    <property type="entry name" value="Met-tRNA-FMT_C"/>
</dbReference>
<dbReference type="InterPro" id="IPR041711">
    <property type="entry name" value="Met-tRNA-FMT_N"/>
</dbReference>
<dbReference type="NCBIfam" id="TIGR00460">
    <property type="entry name" value="fmt"/>
    <property type="match status" value="1"/>
</dbReference>
<dbReference type="PANTHER" id="PTHR11138">
    <property type="entry name" value="METHIONYL-TRNA FORMYLTRANSFERASE"/>
    <property type="match status" value="1"/>
</dbReference>
<dbReference type="PANTHER" id="PTHR11138:SF5">
    <property type="entry name" value="METHIONYL-TRNA FORMYLTRANSFERASE, MITOCHONDRIAL"/>
    <property type="match status" value="1"/>
</dbReference>
<dbReference type="Pfam" id="PF02911">
    <property type="entry name" value="Formyl_trans_C"/>
    <property type="match status" value="1"/>
</dbReference>
<dbReference type="Pfam" id="PF00551">
    <property type="entry name" value="Formyl_trans_N"/>
    <property type="match status" value="1"/>
</dbReference>
<dbReference type="SUPFAM" id="SSF50486">
    <property type="entry name" value="FMT C-terminal domain-like"/>
    <property type="match status" value="1"/>
</dbReference>
<dbReference type="SUPFAM" id="SSF53328">
    <property type="entry name" value="Formyltransferase"/>
    <property type="match status" value="1"/>
</dbReference>
<dbReference type="PROSITE" id="PS00373">
    <property type="entry name" value="GART"/>
    <property type="match status" value="1"/>
</dbReference>